<protein>
    <recommendedName>
        <fullName>Mu-conotoxin-like Cal 12.2b</fullName>
    </recommendedName>
    <alternativeName>
        <fullName>Conotoxin CalTx 12.2.1B</fullName>
    </alternativeName>
</protein>
<keyword id="KW-0102">Bromination</keyword>
<keyword id="KW-1015">Disulfide bond</keyword>
<keyword id="KW-0379">Hydroxylation</keyword>
<keyword id="KW-0872">Ion channel impairing toxin</keyword>
<keyword id="KW-0528">Neurotoxin</keyword>
<keyword id="KW-0964">Secreted</keyword>
<keyword id="KW-0732">Signal</keyword>
<keyword id="KW-0800">Toxin</keyword>
<name>COCB_CONCL</name>
<comment type="function">
    <text evidence="1">Mu-conotoxins block voltage-gated sodium channels. This toxin reversibly blocks voltage-gated sodium channel in cephalopods, with no alteration in the voltage dependence of sodium conductance or on the kinetics of inactivation (By similarity).</text>
</comment>
<comment type="subcellular location">
    <subcellularLocation>
        <location evidence="1">Secreted</location>
    </subcellularLocation>
</comment>
<comment type="tissue specificity">
    <text>Expressed by the venom duct.</text>
</comment>
<comment type="domain">
    <text>The cysteine framework is XII (C-C-C-C-CC-C-C).</text>
</comment>
<comment type="similarity">
    <text evidence="3">Belongs to the conotoxin O1 superfamily.</text>
</comment>
<reference key="1">
    <citation type="journal article" date="2011" name="J. Exp. Biol.">
        <title>A diverse family of novel peptide toxins from an unusual cone snail, Conus californicus.</title>
        <authorList>
            <person name="Gilly W.F."/>
            <person name="Richmond T.A."/>
            <person name="Duda T.F. Jr."/>
            <person name="Elliger C."/>
            <person name="Lebaric Z."/>
            <person name="Schulz J."/>
            <person name="Bingham J.P."/>
            <person name="Sweedler J.V."/>
        </authorList>
    </citation>
    <scope>NUCLEOTIDE SEQUENCE [MRNA]</scope>
    <source>
        <tissue>Venom duct</tissue>
    </source>
</reference>
<dbReference type="EMBL" id="EU022528">
    <property type="protein sequence ID" value="ABS59785.1"/>
    <property type="molecule type" value="mRNA"/>
</dbReference>
<dbReference type="ConoServer" id="817">
    <property type="toxin name" value="Cal12.2b precursor"/>
</dbReference>
<dbReference type="GO" id="GO:0005576">
    <property type="term" value="C:extracellular region"/>
    <property type="evidence" value="ECO:0007669"/>
    <property type="project" value="UniProtKB-SubCell"/>
</dbReference>
<dbReference type="GO" id="GO:0008200">
    <property type="term" value="F:ion channel inhibitor activity"/>
    <property type="evidence" value="ECO:0007669"/>
    <property type="project" value="InterPro"/>
</dbReference>
<dbReference type="GO" id="GO:0090729">
    <property type="term" value="F:toxin activity"/>
    <property type="evidence" value="ECO:0007669"/>
    <property type="project" value="UniProtKB-KW"/>
</dbReference>
<dbReference type="InterPro" id="IPR004214">
    <property type="entry name" value="Conotoxin"/>
</dbReference>
<dbReference type="Pfam" id="PF02950">
    <property type="entry name" value="Conotoxin"/>
    <property type="match status" value="1"/>
</dbReference>
<evidence type="ECO:0000250" key="1"/>
<evidence type="ECO:0000255" key="2"/>
<evidence type="ECO:0000305" key="3"/>
<proteinExistence type="evidence at transcript level"/>
<accession>A7LI90</accession>
<organism>
    <name type="scientific">Californiconus californicus</name>
    <name type="common">California cone</name>
    <name type="synonym">Conus californicus</name>
    <dbReference type="NCBI Taxonomy" id="1736779"/>
    <lineage>
        <taxon>Eukaryota</taxon>
        <taxon>Metazoa</taxon>
        <taxon>Spiralia</taxon>
        <taxon>Lophotrochozoa</taxon>
        <taxon>Mollusca</taxon>
        <taxon>Gastropoda</taxon>
        <taxon>Caenogastropoda</taxon>
        <taxon>Neogastropoda</taxon>
        <taxon>Conoidea</taxon>
        <taxon>Conidae</taxon>
        <taxon>Californiconus</taxon>
    </lineage>
</organism>
<feature type="signal peptide" evidence="2">
    <location>
        <begin position="1"/>
        <end position="19"/>
    </location>
</feature>
<feature type="propeptide" id="PRO_0000392281" evidence="1">
    <location>
        <begin position="20"/>
        <end position="42"/>
    </location>
</feature>
<feature type="peptide" id="PRO_0000392282" description="Mu-conotoxin-like Cal 12.2b">
    <location>
        <begin position="43"/>
        <end position="84"/>
    </location>
</feature>
<feature type="modified residue" description="6'-bromotryptophan" evidence="1">
    <location>
        <position position="72"/>
    </location>
</feature>
<feature type="modified residue" description="4-hydroxyproline" evidence="1">
    <location>
        <position position="77"/>
    </location>
</feature>
<feature type="modified residue" description="6'-bromotryptophan" evidence="1">
    <location>
        <position position="81"/>
    </location>
</feature>
<feature type="disulfide bond" evidence="3">
    <location>
        <begin position="45"/>
        <end position="57"/>
    </location>
</feature>
<feature type="disulfide bond" evidence="1">
    <location>
        <begin position="52"/>
        <end position="65"/>
    </location>
</feature>
<feature type="disulfide bond" evidence="1">
    <location>
        <begin position="59"/>
        <end position="70"/>
    </location>
</feature>
<feature type="disulfide bond" evidence="1">
    <location>
        <begin position="64"/>
        <end position="76"/>
    </location>
</feature>
<sequence>MKLTCVLVVLLLVLPFGDLITTSNTEDNKRGATPWQNSLKARGVCSTPEGSCVHNGCICQNAPCCHPSGCNWVNVCPGFLWDKN</sequence>